<comment type="function">
    <text evidence="1">Catalyzes the conversion of 1-hydroxy-2-methyl-2-(E)-butenyl 4-diphosphate (HMBPP) into a mixture of isopentenyl diphosphate (IPP) and dimethylallyl diphosphate (DMAPP). Acts in the terminal step of the DOXP/MEP pathway for isoprenoid precursor biosynthesis.</text>
</comment>
<comment type="catalytic activity">
    <reaction evidence="1">
        <text>isopentenyl diphosphate + 2 oxidized [2Fe-2S]-[ferredoxin] + H2O = (2E)-4-hydroxy-3-methylbut-2-enyl diphosphate + 2 reduced [2Fe-2S]-[ferredoxin] + 2 H(+)</text>
        <dbReference type="Rhea" id="RHEA:24488"/>
        <dbReference type="Rhea" id="RHEA-COMP:10000"/>
        <dbReference type="Rhea" id="RHEA-COMP:10001"/>
        <dbReference type="ChEBI" id="CHEBI:15377"/>
        <dbReference type="ChEBI" id="CHEBI:15378"/>
        <dbReference type="ChEBI" id="CHEBI:33737"/>
        <dbReference type="ChEBI" id="CHEBI:33738"/>
        <dbReference type="ChEBI" id="CHEBI:128753"/>
        <dbReference type="ChEBI" id="CHEBI:128769"/>
        <dbReference type="EC" id="1.17.7.4"/>
    </reaction>
</comment>
<comment type="catalytic activity">
    <reaction evidence="1">
        <text>dimethylallyl diphosphate + 2 oxidized [2Fe-2S]-[ferredoxin] + H2O = (2E)-4-hydroxy-3-methylbut-2-enyl diphosphate + 2 reduced [2Fe-2S]-[ferredoxin] + 2 H(+)</text>
        <dbReference type="Rhea" id="RHEA:24825"/>
        <dbReference type="Rhea" id="RHEA-COMP:10000"/>
        <dbReference type="Rhea" id="RHEA-COMP:10001"/>
        <dbReference type="ChEBI" id="CHEBI:15377"/>
        <dbReference type="ChEBI" id="CHEBI:15378"/>
        <dbReference type="ChEBI" id="CHEBI:33737"/>
        <dbReference type="ChEBI" id="CHEBI:33738"/>
        <dbReference type="ChEBI" id="CHEBI:57623"/>
        <dbReference type="ChEBI" id="CHEBI:128753"/>
        <dbReference type="EC" id="1.17.7.4"/>
    </reaction>
</comment>
<comment type="cofactor">
    <cofactor evidence="1">
        <name>[4Fe-4S] cluster</name>
        <dbReference type="ChEBI" id="CHEBI:49883"/>
    </cofactor>
    <text evidence="1">Binds 1 [4Fe-4S] cluster per subunit.</text>
</comment>
<comment type="pathway">
    <text evidence="1">Isoprenoid biosynthesis; dimethylallyl diphosphate biosynthesis; dimethylallyl diphosphate from (2E)-4-hydroxy-3-methylbutenyl diphosphate: step 1/1.</text>
</comment>
<comment type="pathway">
    <text evidence="1">Isoprenoid biosynthesis; isopentenyl diphosphate biosynthesis via DXP pathway; isopentenyl diphosphate from 1-deoxy-D-xylulose 5-phosphate: step 6/6.</text>
</comment>
<comment type="similarity">
    <text evidence="1">Belongs to the IspH family.</text>
</comment>
<sequence length="316" mass="34704">MKVLLANPRGFCAGVDRAIEIVKRTIDMLGTPIYVRHEVVHNRFVVDDLKQRGAIFVEELHQVPDGATVIFSAHGVSQAVRRQAAQRGLKVFDATCPLVTKVHLDVARHCRTGRDMILIGHAGHPEVEGTMGQWDQERGTGRIYLVENIDDVATLHVAQPHHLAYTTQTTLSVDDTRNIIDALRQRFPTIQGPKNNDICYATQNRQDAVRELARECDLVLVVGSPNSSNSNRLSELAQREGVASYLIDSAAEIDPAWVIDKHHIGVTAGASAPQVLVDGVLARLYELGATSVSEHSGKPESMVFALPKALRLQLVD</sequence>
<protein>
    <recommendedName>
        <fullName evidence="1">4-hydroxy-3-methylbut-2-enyl diphosphate reductase</fullName>
        <shortName evidence="1">HMBPP reductase</shortName>
        <ecNumber evidence="1">1.17.7.4</ecNumber>
    </recommendedName>
</protein>
<accession>B2I6V0</accession>
<evidence type="ECO:0000255" key="1">
    <source>
        <dbReference type="HAMAP-Rule" id="MF_00191"/>
    </source>
</evidence>
<gene>
    <name evidence="1" type="primary">ispH</name>
    <name type="ordered locus">XfasM23_1519</name>
</gene>
<feature type="chain" id="PRO_1000098991" description="4-hydroxy-3-methylbut-2-enyl diphosphate reductase">
    <location>
        <begin position="1"/>
        <end position="316"/>
    </location>
</feature>
<feature type="active site" description="Proton donor" evidence="1">
    <location>
        <position position="126"/>
    </location>
</feature>
<feature type="binding site" evidence="1">
    <location>
        <position position="12"/>
    </location>
    <ligand>
        <name>[4Fe-4S] cluster</name>
        <dbReference type="ChEBI" id="CHEBI:49883"/>
    </ligand>
</feature>
<feature type="binding site" evidence="1">
    <location>
        <position position="41"/>
    </location>
    <ligand>
        <name>(2E)-4-hydroxy-3-methylbut-2-enyl diphosphate</name>
        <dbReference type="ChEBI" id="CHEBI:128753"/>
    </ligand>
</feature>
<feature type="binding site" evidence="1">
    <location>
        <position position="41"/>
    </location>
    <ligand>
        <name>dimethylallyl diphosphate</name>
        <dbReference type="ChEBI" id="CHEBI:57623"/>
    </ligand>
</feature>
<feature type="binding site" evidence="1">
    <location>
        <position position="41"/>
    </location>
    <ligand>
        <name>isopentenyl diphosphate</name>
        <dbReference type="ChEBI" id="CHEBI:128769"/>
    </ligand>
</feature>
<feature type="binding site" evidence="1">
    <location>
        <position position="74"/>
    </location>
    <ligand>
        <name>(2E)-4-hydroxy-3-methylbut-2-enyl diphosphate</name>
        <dbReference type="ChEBI" id="CHEBI:128753"/>
    </ligand>
</feature>
<feature type="binding site" evidence="1">
    <location>
        <position position="74"/>
    </location>
    <ligand>
        <name>dimethylallyl diphosphate</name>
        <dbReference type="ChEBI" id="CHEBI:57623"/>
    </ligand>
</feature>
<feature type="binding site" evidence="1">
    <location>
        <position position="74"/>
    </location>
    <ligand>
        <name>isopentenyl diphosphate</name>
        <dbReference type="ChEBI" id="CHEBI:128769"/>
    </ligand>
</feature>
<feature type="binding site" evidence="1">
    <location>
        <position position="96"/>
    </location>
    <ligand>
        <name>[4Fe-4S] cluster</name>
        <dbReference type="ChEBI" id="CHEBI:49883"/>
    </ligand>
</feature>
<feature type="binding site" evidence="1">
    <location>
        <position position="124"/>
    </location>
    <ligand>
        <name>(2E)-4-hydroxy-3-methylbut-2-enyl diphosphate</name>
        <dbReference type="ChEBI" id="CHEBI:128753"/>
    </ligand>
</feature>
<feature type="binding site" evidence="1">
    <location>
        <position position="124"/>
    </location>
    <ligand>
        <name>dimethylallyl diphosphate</name>
        <dbReference type="ChEBI" id="CHEBI:57623"/>
    </ligand>
</feature>
<feature type="binding site" evidence="1">
    <location>
        <position position="124"/>
    </location>
    <ligand>
        <name>isopentenyl diphosphate</name>
        <dbReference type="ChEBI" id="CHEBI:128769"/>
    </ligand>
</feature>
<feature type="binding site" evidence="1">
    <location>
        <position position="169"/>
    </location>
    <ligand>
        <name>(2E)-4-hydroxy-3-methylbut-2-enyl diphosphate</name>
        <dbReference type="ChEBI" id="CHEBI:128753"/>
    </ligand>
</feature>
<feature type="binding site" evidence="1">
    <location>
        <position position="199"/>
    </location>
    <ligand>
        <name>[4Fe-4S] cluster</name>
        <dbReference type="ChEBI" id="CHEBI:49883"/>
    </ligand>
</feature>
<feature type="binding site" evidence="1">
    <location>
        <position position="227"/>
    </location>
    <ligand>
        <name>(2E)-4-hydroxy-3-methylbut-2-enyl diphosphate</name>
        <dbReference type="ChEBI" id="CHEBI:128753"/>
    </ligand>
</feature>
<feature type="binding site" evidence="1">
    <location>
        <position position="227"/>
    </location>
    <ligand>
        <name>dimethylallyl diphosphate</name>
        <dbReference type="ChEBI" id="CHEBI:57623"/>
    </ligand>
</feature>
<feature type="binding site" evidence="1">
    <location>
        <position position="227"/>
    </location>
    <ligand>
        <name>isopentenyl diphosphate</name>
        <dbReference type="ChEBI" id="CHEBI:128769"/>
    </ligand>
</feature>
<feature type="binding site" evidence="1">
    <location>
        <position position="228"/>
    </location>
    <ligand>
        <name>(2E)-4-hydroxy-3-methylbut-2-enyl diphosphate</name>
        <dbReference type="ChEBI" id="CHEBI:128753"/>
    </ligand>
</feature>
<feature type="binding site" evidence="1">
    <location>
        <position position="228"/>
    </location>
    <ligand>
        <name>dimethylallyl diphosphate</name>
        <dbReference type="ChEBI" id="CHEBI:57623"/>
    </ligand>
</feature>
<feature type="binding site" evidence="1">
    <location>
        <position position="228"/>
    </location>
    <ligand>
        <name>isopentenyl diphosphate</name>
        <dbReference type="ChEBI" id="CHEBI:128769"/>
    </ligand>
</feature>
<feature type="binding site" evidence="1">
    <location>
        <position position="229"/>
    </location>
    <ligand>
        <name>(2E)-4-hydroxy-3-methylbut-2-enyl diphosphate</name>
        <dbReference type="ChEBI" id="CHEBI:128753"/>
    </ligand>
</feature>
<feature type="binding site" evidence="1">
    <location>
        <position position="229"/>
    </location>
    <ligand>
        <name>dimethylallyl diphosphate</name>
        <dbReference type="ChEBI" id="CHEBI:57623"/>
    </ligand>
</feature>
<feature type="binding site" evidence="1">
    <location>
        <position position="229"/>
    </location>
    <ligand>
        <name>isopentenyl diphosphate</name>
        <dbReference type="ChEBI" id="CHEBI:128769"/>
    </ligand>
</feature>
<feature type="binding site" evidence="1">
    <location>
        <position position="271"/>
    </location>
    <ligand>
        <name>(2E)-4-hydroxy-3-methylbut-2-enyl diphosphate</name>
        <dbReference type="ChEBI" id="CHEBI:128753"/>
    </ligand>
</feature>
<feature type="binding site" evidence="1">
    <location>
        <position position="271"/>
    </location>
    <ligand>
        <name>dimethylallyl diphosphate</name>
        <dbReference type="ChEBI" id="CHEBI:57623"/>
    </ligand>
</feature>
<feature type="binding site" evidence="1">
    <location>
        <position position="271"/>
    </location>
    <ligand>
        <name>isopentenyl diphosphate</name>
        <dbReference type="ChEBI" id="CHEBI:128769"/>
    </ligand>
</feature>
<organism>
    <name type="scientific">Xylella fastidiosa (strain M23)</name>
    <dbReference type="NCBI Taxonomy" id="405441"/>
    <lineage>
        <taxon>Bacteria</taxon>
        <taxon>Pseudomonadati</taxon>
        <taxon>Pseudomonadota</taxon>
        <taxon>Gammaproteobacteria</taxon>
        <taxon>Lysobacterales</taxon>
        <taxon>Lysobacteraceae</taxon>
        <taxon>Xylella</taxon>
    </lineage>
</organism>
<reference key="1">
    <citation type="journal article" date="2010" name="J. Bacteriol.">
        <title>Whole genome sequences of two Xylella fastidiosa strains (M12 and M23) causing almond leaf scorch disease in California.</title>
        <authorList>
            <person name="Chen J."/>
            <person name="Xie G."/>
            <person name="Han S."/>
            <person name="Chertkov O."/>
            <person name="Sims D."/>
            <person name="Civerolo E.L."/>
        </authorList>
    </citation>
    <scope>NUCLEOTIDE SEQUENCE [LARGE SCALE GENOMIC DNA]</scope>
    <source>
        <strain>M23</strain>
    </source>
</reference>
<name>ISPH_XYLF2</name>
<proteinExistence type="inferred from homology"/>
<dbReference type="EC" id="1.17.7.4" evidence="1"/>
<dbReference type="EMBL" id="CP001011">
    <property type="protein sequence ID" value="ACB92927.1"/>
    <property type="molecule type" value="Genomic_DNA"/>
</dbReference>
<dbReference type="RefSeq" id="WP_004088396.1">
    <property type="nucleotide sequence ID" value="NC_010577.1"/>
</dbReference>
<dbReference type="SMR" id="B2I6V0"/>
<dbReference type="GeneID" id="93905256"/>
<dbReference type="KEGG" id="xfn:XfasM23_1519"/>
<dbReference type="HOGENOM" id="CLU_027486_1_0_6"/>
<dbReference type="UniPathway" id="UPA00056">
    <property type="reaction ID" value="UER00097"/>
</dbReference>
<dbReference type="UniPathway" id="UPA00059">
    <property type="reaction ID" value="UER00105"/>
</dbReference>
<dbReference type="Proteomes" id="UP000001698">
    <property type="component" value="Chromosome"/>
</dbReference>
<dbReference type="GO" id="GO:0051539">
    <property type="term" value="F:4 iron, 4 sulfur cluster binding"/>
    <property type="evidence" value="ECO:0007669"/>
    <property type="project" value="UniProtKB-UniRule"/>
</dbReference>
<dbReference type="GO" id="GO:0051745">
    <property type="term" value="F:4-hydroxy-3-methylbut-2-enyl diphosphate reductase activity"/>
    <property type="evidence" value="ECO:0007669"/>
    <property type="project" value="UniProtKB-UniRule"/>
</dbReference>
<dbReference type="GO" id="GO:0046872">
    <property type="term" value="F:metal ion binding"/>
    <property type="evidence" value="ECO:0007669"/>
    <property type="project" value="UniProtKB-KW"/>
</dbReference>
<dbReference type="GO" id="GO:0050992">
    <property type="term" value="P:dimethylallyl diphosphate biosynthetic process"/>
    <property type="evidence" value="ECO:0007669"/>
    <property type="project" value="UniProtKB-UniRule"/>
</dbReference>
<dbReference type="GO" id="GO:0019288">
    <property type="term" value="P:isopentenyl diphosphate biosynthetic process, methylerythritol 4-phosphate pathway"/>
    <property type="evidence" value="ECO:0007669"/>
    <property type="project" value="UniProtKB-UniRule"/>
</dbReference>
<dbReference type="GO" id="GO:0016114">
    <property type="term" value="P:terpenoid biosynthetic process"/>
    <property type="evidence" value="ECO:0007669"/>
    <property type="project" value="UniProtKB-UniRule"/>
</dbReference>
<dbReference type="CDD" id="cd13944">
    <property type="entry name" value="lytB_ispH"/>
    <property type="match status" value="1"/>
</dbReference>
<dbReference type="Gene3D" id="3.40.50.11270">
    <property type="match status" value="1"/>
</dbReference>
<dbReference type="Gene3D" id="3.40.1010.20">
    <property type="entry name" value="4-hydroxy-3-methylbut-2-enyl diphosphate reductase, catalytic domain"/>
    <property type="match status" value="2"/>
</dbReference>
<dbReference type="HAMAP" id="MF_00191">
    <property type="entry name" value="IspH"/>
    <property type="match status" value="1"/>
</dbReference>
<dbReference type="InterPro" id="IPR003451">
    <property type="entry name" value="LytB/IspH"/>
</dbReference>
<dbReference type="NCBIfam" id="TIGR00216">
    <property type="entry name" value="ispH_lytB"/>
    <property type="match status" value="1"/>
</dbReference>
<dbReference type="NCBIfam" id="NF002188">
    <property type="entry name" value="PRK01045.1-2"/>
    <property type="match status" value="1"/>
</dbReference>
<dbReference type="NCBIfam" id="NF002190">
    <property type="entry name" value="PRK01045.1-4"/>
    <property type="match status" value="1"/>
</dbReference>
<dbReference type="PANTHER" id="PTHR30426">
    <property type="entry name" value="4-HYDROXY-3-METHYLBUT-2-ENYL DIPHOSPHATE REDUCTASE"/>
    <property type="match status" value="1"/>
</dbReference>
<dbReference type="PANTHER" id="PTHR30426:SF0">
    <property type="entry name" value="4-HYDROXY-3-METHYLBUT-2-ENYL DIPHOSPHATE REDUCTASE"/>
    <property type="match status" value="1"/>
</dbReference>
<dbReference type="Pfam" id="PF02401">
    <property type="entry name" value="LYTB"/>
    <property type="match status" value="1"/>
</dbReference>
<keyword id="KW-0004">4Fe-4S</keyword>
<keyword id="KW-0408">Iron</keyword>
<keyword id="KW-0411">Iron-sulfur</keyword>
<keyword id="KW-0414">Isoprene biosynthesis</keyword>
<keyword id="KW-0479">Metal-binding</keyword>
<keyword id="KW-0560">Oxidoreductase</keyword>